<feature type="chain" id="PRO_0000187459" description="Large ribosomal subunit protein bL34">
    <location>
        <begin position="1"/>
        <end position="46"/>
    </location>
</feature>
<gene>
    <name type="primary">rpmH</name>
    <name type="synonym">rimA</name>
    <name type="synonym">ssaF</name>
    <name type="ordered locus">SF3761</name>
    <name type="ordered locus">S4010</name>
</gene>
<organism>
    <name type="scientific">Shigella flexneri</name>
    <dbReference type="NCBI Taxonomy" id="623"/>
    <lineage>
        <taxon>Bacteria</taxon>
        <taxon>Pseudomonadati</taxon>
        <taxon>Pseudomonadota</taxon>
        <taxon>Gammaproteobacteria</taxon>
        <taxon>Enterobacterales</taxon>
        <taxon>Enterobacteriaceae</taxon>
        <taxon>Shigella</taxon>
    </lineage>
</organism>
<keyword id="KW-1185">Reference proteome</keyword>
<keyword id="KW-0687">Ribonucleoprotein</keyword>
<keyword id="KW-0689">Ribosomal protein</keyword>
<protein>
    <recommendedName>
        <fullName evidence="1">Large ribosomal subunit protein bL34</fullName>
    </recommendedName>
    <alternativeName>
        <fullName>50S ribosomal protein L34</fullName>
    </alternativeName>
</protein>
<proteinExistence type="inferred from homology"/>
<evidence type="ECO:0000305" key="1"/>
<comment type="similarity">
    <text evidence="1">Belongs to the bacterial ribosomal protein bL34 family.</text>
</comment>
<accession>P0A7Q0</accession>
<accession>P02437</accession>
<name>RL34_SHIFL</name>
<sequence length="46" mass="5380">MKRTFQPSVLKRNRSHGFRARMATKNGRQVLARRRAKGRARLTVSK</sequence>
<reference key="1">
    <citation type="journal article" date="2002" name="Nucleic Acids Res.">
        <title>Genome sequence of Shigella flexneri 2a: insights into pathogenicity through comparison with genomes of Escherichia coli K12 and O157.</title>
        <authorList>
            <person name="Jin Q."/>
            <person name="Yuan Z."/>
            <person name="Xu J."/>
            <person name="Wang Y."/>
            <person name="Shen Y."/>
            <person name="Lu W."/>
            <person name="Wang J."/>
            <person name="Liu H."/>
            <person name="Yang J."/>
            <person name="Yang F."/>
            <person name="Zhang X."/>
            <person name="Zhang J."/>
            <person name="Yang G."/>
            <person name="Wu H."/>
            <person name="Qu D."/>
            <person name="Dong J."/>
            <person name="Sun L."/>
            <person name="Xue Y."/>
            <person name="Zhao A."/>
            <person name="Gao Y."/>
            <person name="Zhu J."/>
            <person name="Kan B."/>
            <person name="Ding K."/>
            <person name="Chen S."/>
            <person name="Cheng H."/>
            <person name="Yao Z."/>
            <person name="He B."/>
            <person name="Chen R."/>
            <person name="Ma D."/>
            <person name="Qiang B."/>
            <person name="Wen Y."/>
            <person name="Hou Y."/>
            <person name="Yu J."/>
        </authorList>
    </citation>
    <scope>NUCLEOTIDE SEQUENCE [LARGE SCALE GENOMIC DNA]</scope>
    <source>
        <strain>301 / Serotype 2a</strain>
    </source>
</reference>
<reference key="2">
    <citation type="journal article" date="2003" name="Infect. Immun.">
        <title>Complete genome sequence and comparative genomics of Shigella flexneri serotype 2a strain 2457T.</title>
        <authorList>
            <person name="Wei J."/>
            <person name="Goldberg M.B."/>
            <person name="Burland V."/>
            <person name="Venkatesan M.M."/>
            <person name="Deng W."/>
            <person name="Fournier G."/>
            <person name="Mayhew G.F."/>
            <person name="Plunkett G. III"/>
            <person name="Rose D.J."/>
            <person name="Darling A."/>
            <person name="Mau B."/>
            <person name="Perna N.T."/>
            <person name="Payne S.M."/>
            <person name="Runyen-Janecky L.J."/>
            <person name="Zhou S."/>
            <person name="Schwartz D.C."/>
            <person name="Blattner F.R."/>
        </authorList>
    </citation>
    <scope>NUCLEOTIDE SEQUENCE [LARGE SCALE GENOMIC DNA]</scope>
    <source>
        <strain>ATCC 700930 / 2457T / Serotype 2a</strain>
    </source>
</reference>
<dbReference type="EMBL" id="AE005674">
    <property type="protein sequence ID" value="AAN45204.1"/>
    <property type="molecule type" value="Genomic_DNA"/>
</dbReference>
<dbReference type="EMBL" id="AE014073">
    <property type="protein sequence ID" value="AAP18993.1"/>
    <property type="molecule type" value="Genomic_DNA"/>
</dbReference>
<dbReference type="RefSeq" id="NP_709497.1">
    <property type="nucleotide sequence ID" value="NC_004337.2"/>
</dbReference>
<dbReference type="RefSeq" id="WP_000831330.1">
    <property type="nucleotide sequence ID" value="NZ_WPGW01000019.1"/>
</dbReference>
<dbReference type="SMR" id="P0A7Q0"/>
<dbReference type="STRING" id="198214.SF3761"/>
<dbReference type="PaxDb" id="198214-SF3761"/>
<dbReference type="GeneID" id="1025477"/>
<dbReference type="GeneID" id="98190980"/>
<dbReference type="KEGG" id="sfl:SF3761"/>
<dbReference type="KEGG" id="sfx:S4010"/>
<dbReference type="PATRIC" id="fig|198214.7.peg.4438"/>
<dbReference type="HOGENOM" id="CLU_129938_2_1_6"/>
<dbReference type="Proteomes" id="UP000001006">
    <property type="component" value="Chromosome"/>
</dbReference>
<dbReference type="Proteomes" id="UP000002673">
    <property type="component" value="Chromosome"/>
</dbReference>
<dbReference type="GO" id="GO:1990904">
    <property type="term" value="C:ribonucleoprotein complex"/>
    <property type="evidence" value="ECO:0007669"/>
    <property type="project" value="UniProtKB-KW"/>
</dbReference>
<dbReference type="GO" id="GO:0005840">
    <property type="term" value="C:ribosome"/>
    <property type="evidence" value="ECO:0007669"/>
    <property type="project" value="UniProtKB-KW"/>
</dbReference>
<dbReference type="GO" id="GO:0003735">
    <property type="term" value="F:structural constituent of ribosome"/>
    <property type="evidence" value="ECO:0007669"/>
    <property type="project" value="InterPro"/>
</dbReference>
<dbReference type="GO" id="GO:0006412">
    <property type="term" value="P:translation"/>
    <property type="evidence" value="ECO:0007669"/>
    <property type="project" value="UniProtKB-UniRule"/>
</dbReference>
<dbReference type="FunFam" id="1.10.287.3980:FF:000001">
    <property type="entry name" value="Mitochondrial ribosomal protein L34"/>
    <property type="match status" value="1"/>
</dbReference>
<dbReference type="Gene3D" id="1.10.287.3980">
    <property type="match status" value="1"/>
</dbReference>
<dbReference type="HAMAP" id="MF_00391">
    <property type="entry name" value="Ribosomal_bL34"/>
    <property type="match status" value="1"/>
</dbReference>
<dbReference type="InterPro" id="IPR000271">
    <property type="entry name" value="Ribosomal_bL34"/>
</dbReference>
<dbReference type="InterPro" id="IPR020939">
    <property type="entry name" value="Ribosomal_bL34_CS"/>
</dbReference>
<dbReference type="NCBIfam" id="TIGR01030">
    <property type="entry name" value="rpmH_bact"/>
    <property type="match status" value="1"/>
</dbReference>
<dbReference type="PANTHER" id="PTHR14503:SF4">
    <property type="entry name" value="LARGE RIBOSOMAL SUBUNIT PROTEIN BL34M"/>
    <property type="match status" value="1"/>
</dbReference>
<dbReference type="PANTHER" id="PTHR14503">
    <property type="entry name" value="MITOCHONDRIAL RIBOSOMAL PROTEIN 34 FAMILY MEMBER"/>
    <property type="match status" value="1"/>
</dbReference>
<dbReference type="Pfam" id="PF00468">
    <property type="entry name" value="Ribosomal_L34"/>
    <property type="match status" value="1"/>
</dbReference>
<dbReference type="PROSITE" id="PS00784">
    <property type="entry name" value="RIBOSOMAL_L34"/>
    <property type="match status" value="1"/>
</dbReference>